<reference key="1">
    <citation type="journal article" date="2008" name="PLoS ONE">
        <title>Genome sequence of the saprophyte Leptospira biflexa provides insights into the evolution of Leptospira and the pathogenesis of leptospirosis.</title>
        <authorList>
            <person name="Picardeau M."/>
            <person name="Bulach D.M."/>
            <person name="Bouchier C."/>
            <person name="Zuerner R.L."/>
            <person name="Zidane N."/>
            <person name="Wilson P.J."/>
            <person name="Creno S."/>
            <person name="Kuczek E.S."/>
            <person name="Bommezzadri S."/>
            <person name="Davis J.C."/>
            <person name="McGrath A."/>
            <person name="Johnson M.J."/>
            <person name="Boursaux-Eude C."/>
            <person name="Seemann T."/>
            <person name="Rouy Z."/>
            <person name="Coppel R.L."/>
            <person name="Rood J.I."/>
            <person name="Lajus A."/>
            <person name="Davies J.K."/>
            <person name="Medigue C."/>
            <person name="Adler B."/>
        </authorList>
    </citation>
    <scope>NUCLEOTIDE SEQUENCE [LARGE SCALE GENOMIC DNA]</scope>
    <source>
        <strain>Patoc 1 / ATCC 23582 / Paris</strain>
    </source>
</reference>
<accession>B0STF1</accession>
<name>PAND_LEPBP</name>
<organism>
    <name type="scientific">Leptospira biflexa serovar Patoc (strain Patoc 1 / ATCC 23582 / Paris)</name>
    <dbReference type="NCBI Taxonomy" id="456481"/>
    <lineage>
        <taxon>Bacteria</taxon>
        <taxon>Pseudomonadati</taxon>
        <taxon>Spirochaetota</taxon>
        <taxon>Spirochaetia</taxon>
        <taxon>Leptospirales</taxon>
        <taxon>Leptospiraceae</taxon>
        <taxon>Leptospira</taxon>
    </lineage>
</organism>
<evidence type="ECO:0000255" key="1">
    <source>
        <dbReference type="HAMAP-Rule" id="MF_00446"/>
    </source>
</evidence>
<sequence length="118" mass="13016">MIITVCKGKIHRAVVTEAELHYEGSLTVDQDLMDMAGMKPYEQVSVVNVNNGARFETYLIVGERGSGTICLNGAAARLGMKGDKVIIITYGQVEEKDLPNDYQPKVVFVDENNRPKKA</sequence>
<feature type="chain" id="PRO_1000124841" description="Aspartate 1-decarboxylase beta chain" evidence="1">
    <location>
        <begin position="1"/>
        <end position="24"/>
    </location>
</feature>
<feature type="chain" id="PRO_1000124842" description="Aspartate 1-decarboxylase alpha chain" evidence="1">
    <location>
        <begin position="25"/>
        <end position="118"/>
    </location>
</feature>
<feature type="active site" description="Schiff-base intermediate with substrate; via pyruvic acid" evidence="1">
    <location>
        <position position="25"/>
    </location>
</feature>
<feature type="active site" description="Proton donor" evidence="1">
    <location>
        <position position="58"/>
    </location>
</feature>
<feature type="binding site" evidence="1">
    <location>
        <position position="57"/>
    </location>
    <ligand>
        <name>substrate</name>
    </ligand>
</feature>
<feature type="binding site" evidence="1">
    <location>
        <begin position="73"/>
        <end position="75"/>
    </location>
    <ligand>
        <name>substrate</name>
    </ligand>
</feature>
<feature type="modified residue" description="Pyruvic acid (Ser)" evidence="1">
    <location>
        <position position="25"/>
    </location>
</feature>
<comment type="function">
    <text evidence="1">Catalyzes the pyruvoyl-dependent decarboxylation of aspartate to produce beta-alanine.</text>
</comment>
<comment type="catalytic activity">
    <reaction evidence="1">
        <text>L-aspartate + H(+) = beta-alanine + CO2</text>
        <dbReference type="Rhea" id="RHEA:19497"/>
        <dbReference type="ChEBI" id="CHEBI:15378"/>
        <dbReference type="ChEBI" id="CHEBI:16526"/>
        <dbReference type="ChEBI" id="CHEBI:29991"/>
        <dbReference type="ChEBI" id="CHEBI:57966"/>
        <dbReference type="EC" id="4.1.1.11"/>
    </reaction>
</comment>
<comment type="cofactor">
    <cofactor evidence="1">
        <name>pyruvate</name>
        <dbReference type="ChEBI" id="CHEBI:15361"/>
    </cofactor>
    <text evidence="1">Binds 1 pyruvoyl group covalently per subunit.</text>
</comment>
<comment type="pathway">
    <text evidence="1">Cofactor biosynthesis; (R)-pantothenate biosynthesis; beta-alanine from L-aspartate: step 1/1.</text>
</comment>
<comment type="subunit">
    <text evidence="1">Heterooctamer of four alpha and four beta subunits.</text>
</comment>
<comment type="subcellular location">
    <subcellularLocation>
        <location evidence="1">Cytoplasm</location>
    </subcellularLocation>
</comment>
<comment type="PTM">
    <text evidence="1">Is synthesized initially as an inactive proenzyme, which is activated by self-cleavage at a specific serine bond to produce a beta-subunit with a hydroxyl group at its C-terminus and an alpha-subunit with a pyruvoyl group at its N-terminus.</text>
</comment>
<comment type="similarity">
    <text evidence="1">Belongs to the PanD family.</text>
</comment>
<dbReference type="EC" id="4.1.1.11" evidence="1"/>
<dbReference type="EMBL" id="CP000786">
    <property type="protein sequence ID" value="ABZ98391.1"/>
    <property type="molecule type" value="Genomic_DNA"/>
</dbReference>
<dbReference type="RefSeq" id="WP_012389256.1">
    <property type="nucleotide sequence ID" value="NC_010602.1"/>
</dbReference>
<dbReference type="SMR" id="B0STF1"/>
<dbReference type="STRING" id="456481.LEPBI_I2296"/>
<dbReference type="KEGG" id="lbi:LEPBI_I2296"/>
<dbReference type="HOGENOM" id="CLU_115305_2_0_12"/>
<dbReference type="OrthoDB" id="9803983at2"/>
<dbReference type="BioCyc" id="LBIF456481:LEPBI_RS11330-MONOMER"/>
<dbReference type="UniPathway" id="UPA00028">
    <property type="reaction ID" value="UER00002"/>
</dbReference>
<dbReference type="Proteomes" id="UP000001847">
    <property type="component" value="Chromosome I"/>
</dbReference>
<dbReference type="GO" id="GO:0005829">
    <property type="term" value="C:cytosol"/>
    <property type="evidence" value="ECO:0007669"/>
    <property type="project" value="TreeGrafter"/>
</dbReference>
<dbReference type="GO" id="GO:0004068">
    <property type="term" value="F:aspartate 1-decarboxylase activity"/>
    <property type="evidence" value="ECO:0007669"/>
    <property type="project" value="UniProtKB-UniRule"/>
</dbReference>
<dbReference type="GO" id="GO:0006523">
    <property type="term" value="P:alanine biosynthetic process"/>
    <property type="evidence" value="ECO:0007669"/>
    <property type="project" value="InterPro"/>
</dbReference>
<dbReference type="GO" id="GO:0015940">
    <property type="term" value="P:pantothenate biosynthetic process"/>
    <property type="evidence" value="ECO:0007669"/>
    <property type="project" value="UniProtKB-UniRule"/>
</dbReference>
<dbReference type="CDD" id="cd06919">
    <property type="entry name" value="Asp_decarbox"/>
    <property type="match status" value="1"/>
</dbReference>
<dbReference type="Gene3D" id="2.40.40.20">
    <property type="match status" value="1"/>
</dbReference>
<dbReference type="HAMAP" id="MF_00446">
    <property type="entry name" value="PanD"/>
    <property type="match status" value="1"/>
</dbReference>
<dbReference type="InterPro" id="IPR009010">
    <property type="entry name" value="Asp_de-COase-like_dom_sf"/>
</dbReference>
<dbReference type="InterPro" id="IPR003190">
    <property type="entry name" value="Asp_decarbox"/>
</dbReference>
<dbReference type="NCBIfam" id="TIGR00223">
    <property type="entry name" value="panD"/>
    <property type="match status" value="1"/>
</dbReference>
<dbReference type="PANTHER" id="PTHR21012">
    <property type="entry name" value="ASPARTATE 1-DECARBOXYLASE"/>
    <property type="match status" value="1"/>
</dbReference>
<dbReference type="PANTHER" id="PTHR21012:SF0">
    <property type="entry name" value="ASPARTATE 1-DECARBOXYLASE"/>
    <property type="match status" value="1"/>
</dbReference>
<dbReference type="Pfam" id="PF02261">
    <property type="entry name" value="Asp_decarbox"/>
    <property type="match status" value="1"/>
</dbReference>
<dbReference type="PIRSF" id="PIRSF006246">
    <property type="entry name" value="Asp_decarbox"/>
    <property type="match status" value="1"/>
</dbReference>
<dbReference type="SUPFAM" id="SSF50692">
    <property type="entry name" value="ADC-like"/>
    <property type="match status" value="1"/>
</dbReference>
<protein>
    <recommendedName>
        <fullName evidence="1">Aspartate 1-decarboxylase</fullName>
        <ecNumber evidence="1">4.1.1.11</ecNumber>
    </recommendedName>
    <alternativeName>
        <fullName evidence="1">Aspartate alpha-decarboxylase</fullName>
    </alternativeName>
    <component>
        <recommendedName>
            <fullName evidence="1">Aspartate 1-decarboxylase beta chain</fullName>
        </recommendedName>
    </component>
    <component>
        <recommendedName>
            <fullName evidence="1">Aspartate 1-decarboxylase alpha chain</fullName>
        </recommendedName>
    </component>
</protein>
<keyword id="KW-0068">Autocatalytic cleavage</keyword>
<keyword id="KW-0963">Cytoplasm</keyword>
<keyword id="KW-0210">Decarboxylase</keyword>
<keyword id="KW-0456">Lyase</keyword>
<keyword id="KW-0566">Pantothenate biosynthesis</keyword>
<keyword id="KW-0670">Pyruvate</keyword>
<keyword id="KW-1185">Reference proteome</keyword>
<keyword id="KW-0704">Schiff base</keyword>
<keyword id="KW-0865">Zymogen</keyword>
<proteinExistence type="inferred from homology"/>
<gene>
    <name evidence="1" type="primary">panD</name>
    <name type="ordered locus">LEPBI_I2296</name>
</gene>